<keyword id="KW-0029">Amino-acid transport</keyword>
<keyword id="KW-0067">ATP-binding</keyword>
<keyword id="KW-1003">Cell membrane</keyword>
<keyword id="KW-0472">Membrane</keyword>
<keyword id="KW-0547">Nucleotide-binding</keyword>
<keyword id="KW-1278">Translocase</keyword>
<keyword id="KW-0813">Transport</keyword>
<reference key="1">
    <citation type="journal article" date="2007" name="J. Bacteriol.">
        <title>The complete genome sequence of the lactic acid bacterial paradigm Lactococcus lactis subsp. cremoris MG1363.</title>
        <authorList>
            <person name="Wegmann U."/>
            <person name="O'Connell-Motherway M."/>
            <person name="Zomer A."/>
            <person name="Buist G."/>
            <person name="Shearman C."/>
            <person name="Canchaya C."/>
            <person name="Ventura M."/>
            <person name="Goesmann A."/>
            <person name="Gasson M.J."/>
            <person name="Kuipers O.P."/>
            <person name="van Sinderen D."/>
            <person name="Kok J."/>
        </authorList>
    </citation>
    <scope>NUCLEOTIDE SEQUENCE [LARGE SCALE GENOMIC DNA]</scope>
    <source>
        <strain>MG1363</strain>
    </source>
</reference>
<sequence length="368" mass="40987">MTAIIELNNLSVQFHQKGRLVTAVKNATLHIEKGDIYGVIGYSGAGKSTLVRTINLLQKPTEGQIVINGEKIFDSENPVKFTGAKLREFRQKIGMIFQHFNLLSEKTVFNNVAFALQHSQIEDKNGKKRYLTKKEKNDKVTELLKLVDLADLSDKYPAQLSGGQKQRVAIARALANDPEILISDEGTSALDPKTTNQILDLLKSLHEKLGITVVLITHEMQVVKEIANKVAVMQNGEIIEQNSLIDIFAQPKEALTKQFIETTSSVNRFIASLSKTELLAQLADDEELIHLDYSGSELEDPVVSDITKKFDVTTNIFYGNVELLQGQPFGSLVLTLKGSSEHRAAAKAYFVERHLKFEVLGKIERTVD</sequence>
<evidence type="ECO:0000255" key="1">
    <source>
        <dbReference type="HAMAP-Rule" id="MF_01719"/>
    </source>
</evidence>
<organism>
    <name type="scientific">Lactococcus lactis subsp. cremoris (strain MG1363)</name>
    <dbReference type="NCBI Taxonomy" id="416870"/>
    <lineage>
        <taxon>Bacteria</taxon>
        <taxon>Bacillati</taxon>
        <taxon>Bacillota</taxon>
        <taxon>Bacilli</taxon>
        <taxon>Lactobacillales</taxon>
        <taxon>Streptococcaceae</taxon>
        <taxon>Lactococcus</taxon>
        <taxon>Lactococcus cremoris subsp. cremoris</taxon>
    </lineage>
</organism>
<accession>P0CI33</accession>
<accession>A2RI53</accession>
<accession>Q9RLV5</accession>
<protein>
    <recommendedName>
        <fullName evidence="1">Methionine import ATP-binding protein MetN</fullName>
        <ecNumber evidence="1">7.4.2.11</ecNumber>
    </recommendedName>
</protein>
<comment type="function">
    <text evidence="1">Part of the ABC transporter complex MetNIQ involved in methionine import. Responsible for energy coupling to the transport system.</text>
</comment>
<comment type="catalytic activity">
    <reaction evidence="1">
        <text>L-methionine(out) + ATP + H2O = L-methionine(in) + ADP + phosphate + H(+)</text>
        <dbReference type="Rhea" id="RHEA:29779"/>
        <dbReference type="ChEBI" id="CHEBI:15377"/>
        <dbReference type="ChEBI" id="CHEBI:15378"/>
        <dbReference type="ChEBI" id="CHEBI:30616"/>
        <dbReference type="ChEBI" id="CHEBI:43474"/>
        <dbReference type="ChEBI" id="CHEBI:57844"/>
        <dbReference type="ChEBI" id="CHEBI:456216"/>
        <dbReference type="EC" id="7.4.2.11"/>
    </reaction>
</comment>
<comment type="catalytic activity">
    <reaction evidence="1">
        <text>D-methionine(out) + ATP + H2O = D-methionine(in) + ADP + phosphate + H(+)</text>
        <dbReference type="Rhea" id="RHEA:29767"/>
        <dbReference type="ChEBI" id="CHEBI:15377"/>
        <dbReference type="ChEBI" id="CHEBI:15378"/>
        <dbReference type="ChEBI" id="CHEBI:30616"/>
        <dbReference type="ChEBI" id="CHEBI:43474"/>
        <dbReference type="ChEBI" id="CHEBI:57932"/>
        <dbReference type="ChEBI" id="CHEBI:456216"/>
        <dbReference type="EC" id="7.4.2.11"/>
    </reaction>
</comment>
<comment type="subunit">
    <text evidence="1">The complex is composed of two ATP-binding proteins (MetN), two transmembrane proteins (MetI) and a solute-binding protein (MetQ).</text>
</comment>
<comment type="subcellular location">
    <subcellularLocation>
        <location evidence="1">Cell membrane</location>
        <topology evidence="1">Peripheral membrane protein</topology>
    </subcellularLocation>
</comment>
<comment type="similarity">
    <text evidence="1">Belongs to the ABC transporter superfamily. Methionine importer (TC 3.A.1.24) family.</text>
</comment>
<proteinExistence type="inferred from homology"/>
<gene>
    <name evidence="1" type="primary">metN</name>
    <name type="ordered locus">llmg_0341</name>
</gene>
<feature type="chain" id="PRO_0000270320" description="Methionine import ATP-binding protein MetN">
    <location>
        <begin position="1"/>
        <end position="368"/>
    </location>
</feature>
<feature type="domain" description="ABC transporter" evidence="1">
    <location>
        <begin position="5"/>
        <end position="260"/>
    </location>
</feature>
<feature type="binding site" evidence="1">
    <location>
        <begin position="41"/>
        <end position="48"/>
    </location>
    <ligand>
        <name>ATP</name>
        <dbReference type="ChEBI" id="CHEBI:30616"/>
    </ligand>
</feature>
<dbReference type="EC" id="7.4.2.11" evidence="1"/>
<dbReference type="EMBL" id="AM406671">
    <property type="protein sequence ID" value="CAL96946.1"/>
    <property type="molecule type" value="Genomic_DNA"/>
</dbReference>
<dbReference type="RefSeq" id="WP_011834402.1">
    <property type="nucleotide sequence ID" value="NC_009004.1"/>
</dbReference>
<dbReference type="SMR" id="P0CI33"/>
<dbReference type="STRING" id="416870.llmg_0341"/>
<dbReference type="KEGG" id="llm:llmg_0341"/>
<dbReference type="eggNOG" id="COG1135">
    <property type="taxonomic scope" value="Bacteria"/>
</dbReference>
<dbReference type="HOGENOM" id="CLU_000604_1_3_9"/>
<dbReference type="OrthoDB" id="9802264at2"/>
<dbReference type="PhylomeDB" id="P0CI33"/>
<dbReference type="Proteomes" id="UP000000364">
    <property type="component" value="Chromosome"/>
</dbReference>
<dbReference type="GO" id="GO:0005886">
    <property type="term" value="C:plasma membrane"/>
    <property type="evidence" value="ECO:0007669"/>
    <property type="project" value="UniProtKB-SubCell"/>
</dbReference>
<dbReference type="GO" id="GO:0033232">
    <property type="term" value="F:ABC-type D-methionine transporter activity"/>
    <property type="evidence" value="ECO:0007669"/>
    <property type="project" value="UniProtKB-EC"/>
</dbReference>
<dbReference type="GO" id="GO:0005524">
    <property type="term" value="F:ATP binding"/>
    <property type="evidence" value="ECO:0007669"/>
    <property type="project" value="UniProtKB-KW"/>
</dbReference>
<dbReference type="GO" id="GO:0016887">
    <property type="term" value="F:ATP hydrolysis activity"/>
    <property type="evidence" value="ECO:0007669"/>
    <property type="project" value="InterPro"/>
</dbReference>
<dbReference type="CDD" id="cd03258">
    <property type="entry name" value="ABC_MetN_methionine_transporter"/>
    <property type="match status" value="1"/>
</dbReference>
<dbReference type="Gene3D" id="3.30.70.260">
    <property type="match status" value="1"/>
</dbReference>
<dbReference type="Gene3D" id="3.40.50.300">
    <property type="entry name" value="P-loop containing nucleotide triphosphate hydrolases"/>
    <property type="match status" value="1"/>
</dbReference>
<dbReference type="InterPro" id="IPR003593">
    <property type="entry name" value="AAA+_ATPase"/>
</dbReference>
<dbReference type="InterPro" id="IPR003439">
    <property type="entry name" value="ABC_transporter-like_ATP-bd"/>
</dbReference>
<dbReference type="InterPro" id="IPR017871">
    <property type="entry name" value="ABC_transporter-like_CS"/>
</dbReference>
<dbReference type="InterPro" id="IPR045865">
    <property type="entry name" value="ACT-like_dom_sf"/>
</dbReference>
<dbReference type="InterPro" id="IPR041701">
    <property type="entry name" value="MetN_ABC"/>
</dbReference>
<dbReference type="InterPro" id="IPR050086">
    <property type="entry name" value="MetN_ABC_transporter-like"/>
</dbReference>
<dbReference type="InterPro" id="IPR018449">
    <property type="entry name" value="NIL_domain"/>
</dbReference>
<dbReference type="InterPro" id="IPR027417">
    <property type="entry name" value="P-loop_NTPase"/>
</dbReference>
<dbReference type="PANTHER" id="PTHR43166">
    <property type="entry name" value="AMINO ACID IMPORT ATP-BINDING PROTEIN"/>
    <property type="match status" value="1"/>
</dbReference>
<dbReference type="PANTHER" id="PTHR43166:SF30">
    <property type="entry name" value="METHIONINE IMPORT ATP-BINDING PROTEIN METN"/>
    <property type="match status" value="1"/>
</dbReference>
<dbReference type="Pfam" id="PF00005">
    <property type="entry name" value="ABC_tran"/>
    <property type="match status" value="1"/>
</dbReference>
<dbReference type="Pfam" id="PF09383">
    <property type="entry name" value="NIL"/>
    <property type="match status" value="1"/>
</dbReference>
<dbReference type="SMART" id="SM00382">
    <property type="entry name" value="AAA"/>
    <property type="match status" value="1"/>
</dbReference>
<dbReference type="SMART" id="SM00930">
    <property type="entry name" value="NIL"/>
    <property type="match status" value="1"/>
</dbReference>
<dbReference type="SUPFAM" id="SSF55021">
    <property type="entry name" value="ACT-like"/>
    <property type="match status" value="1"/>
</dbReference>
<dbReference type="SUPFAM" id="SSF52540">
    <property type="entry name" value="P-loop containing nucleoside triphosphate hydrolases"/>
    <property type="match status" value="1"/>
</dbReference>
<dbReference type="PROSITE" id="PS00211">
    <property type="entry name" value="ABC_TRANSPORTER_1"/>
    <property type="match status" value="1"/>
</dbReference>
<dbReference type="PROSITE" id="PS50893">
    <property type="entry name" value="ABC_TRANSPORTER_2"/>
    <property type="match status" value="1"/>
</dbReference>
<dbReference type="PROSITE" id="PS51264">
    <property type="entry name" value="METN"/>
    <property type="match status" value="1"/>
</dbReference>
<name>METN_LACLM</name>